<organism>
    <name type="scientific">Homo sapiens</name>
    <name type="common">Human</name>
    <dbReference type="NCBI Taxonomy" id="9606"/>
    <lineage>
        <taxon>Eukaryota</taxon>
        <taxon>Metazoa</taxon>
        <taxon>Chordata</taxon>
        <taxon>Craniata</taxon>
        <taxon>Vertebrata</taxon>
        <taxon>Euteleostomi</taxon>
        <taxon>Mammalia</taxon>
        <taxon>Eutheria</taxon>
        <taxon>Euarchontoglires</taxon>
        <taxon>Primates</taxon>
        <taxon>Haplorrhini</taxon>
        <taxon>Catarrhini</taxon>
        <taxon>Hominidae</taxon>
        <taxon>Homo</taxon>
    </lineage>
</organism>
<feature type="chain" id="PRO_0000066007" description="Ragulator complex protein LAMTOR5">
    <location>
        <begin position="1"/>
        <end position="91"/>
    </location>
</feature>
<feature type="modified residue" description="N-acetylmethionine" evidence="21 49 50">
    <location>
        <position position="1"/>
    </location>
</feature>
<feature type="mutagenesis site" description="No change." evidence="20">
    <original>T</original>
    <variation>A</variation>
    <location>
        <position position="12"/>
    </location>
</feature>
<feature type="mutagenesis site" description="No interaction with XABX14-154 (truncated form of HBX)." evidence="20">
    <original>T</original>
    <variation>A</variation>
    <location>
        <position position="36"/>
    </location>
</feature>
<feature type="helix" evidence="53">
    <location>
        <begin position="3"/>
        <end position="13"/>
    </location>
</feature>
<feature type="strand" evidence="51">
    <location>
        <begin position="15"/>
        <end position="17"/>
    </location>
</feature>
<feature type="strand" evidence="53">
    <location>
        <begin position="18"/>
        <end position="24"/>
    </location>
</feature>
<feature type="strand" evidence="52">
    <location>
        <begin position="26"/>
        <end position="28"/>
    </location>
</feature>
<feature type="strand" evidence="53">
    <location>
        <begin position="30"/>
        <end position="35"/>
    </location>
</feature>
<feature type="helix" evidence="53">
    <location>
        <begin position="39"/>
        <end position="41"/>
    </location>
</feature>
<feature type="helix" evidence="53">
    <location>
        <begin position="42"/>
        <end position="52"/>
    </location>
</feature>
<feature type="helix" evidence="53">
    <location>
        <begin position="53"/>
        <end position="55"/>
    </location>
</feature>
<feature type="strand" evidence="55">
    <location>
        <begin position="56"/>
        <end position="58"/>
    </location>
</feature>
<feature type="strand" evidence="54">
    <location>
        <begin position="59"/>
        <end position="61"/>
    </location>
</feature>
<feature type="strand" evidence="53">
    <location>
        <begin position="64"/>
        <end position="69"/>
    </location>
</feature>
<feature type="strand" evidence="53">
    <location>
        <begin position="72"/>
        <end position="79"/>
    </location>
</feature>
<feature type="strand" evidence="53">
    <location>
        <begin position="82"/>
        <end position="88"/>
    </location>
</feature>
<protein>
    <recommendedName>
        <fullName>Ragulator complex protein LAMTOR5</fullName>
    </recommendedName>
    <alternativeName>
        <fullName evidence="22 23">Hepatitis B virus X-interacting protein</fullName>
        <shortName evidence="22 23">HBV X-interacting protein</shortName>
        <shortName evidence="22 23">HBX-interacting protein</shortName>
    </alternativeName>
    <alternativeName>
        <fullName>Late endosomal/lysosomal adaptor and MAPK and MTOR activator 5</fullName>
    </alternativeName>
</protein>
<accession>O43504</accession>
<accession>A0A0C4DGV4</accession>
<accession>Q6IBD8</accession>
<dbReference type="EMBL" id="AF029890">
    <property type="protein sequence ID" value="AAC52032.1"/>
    <property type="molecule type" value="mRNA"/>
</dbReference>
<dbReference type="EMBL" id="AY623819">
    <property type="protein sequence ID" value="AAV30683.1"/>
    <property type="molecule type" value="mRNA"/>
</dbReference>
<dbReference type="EMBL" id="CR456866">
    <property type="protein sequence ID" value="CAG33147.1"/>
    <property type="molecule type" value="mRNA"/>
</dbReference>
<dbReference type="EMBL" id="CR542130">
    <property type="protein sequence ID" value="CAG46927.1"/>
    <property type="molecule type" value="mRNA"/>
</dbReference>
<dbReference type="EMBL" id="AL390797">
    <property type="status" value="NOT_ANNOTATED_CDS"/>
    <property type="molecule type" value="Genomic_DNA"/>
</dbReference>
<dbReference type="EMBL" id="CH471122">
    <property type="protein sequence ID" value="EAW56447.1"/>
    <property type="status" value="ALT_SEQ"/>
    <property type="molecule type" value="Genomic_DNA"/>
</dbReference>
<dbReference type="EMBL" id="BC062619">
    <property type="protein sequence ID" value="AAH62619.2"/>
    <property type="status" value="ALT_INIT"/>
    <property type="molecule type" value="mRNA"/>
</dbReference>
<dbReference type="CCDS" id="CCDS91022.1"/>
<dbReference type="RefSeq" id="NP_001369222.1">
    <property type="nucleotide sequence ID" value="NM_001382293.1"/>
</dbReference>
<dbReference type="RefSeq" id="NP_006393.2">
    <property type="nucleotide sequence ID" value="NM_006402.2"/>
</dbReference>
<dbReference type="PDB" id="3MS6">
    <property type="method" value="X-ray"/>
    <property type="resolution" value="2.08 A"/>
    <property type="chains" value="A=1-91"/>
</dbReference>
<dbReference type="PDB" id="3MSH">
    <property type="method" value="X-ray"/>
    <property type="resolution" value="1.51 A"/>
    <property type="chains" value="A=1-91"/>
</dbReference>
<dbReference type="PDB" id="5VOK">
    <property type="method" value="X-ray"/>
    <property type="resolution" value="2.89 A"/>
    <property type="chains" value="A/C/E/G=1-91"/>
</dbReference>
<dbReference type="PDB" id="5X6U">
    <property type="method" value="X-ray"/>
    <property type="resolution" value="2.40 A"/>
    <property type="chains" value="C=1-91"/>
</dbReference>
<dbReference type="PDB" id="5X6V">
    <property type="method" value="X-ray"/>
    <property type="resolution" value="2.02 A"/>
    <property type="chains" value="C=1-91"/>
</dbReference>
<dbReference type="PDB" id="5Y38">
    <property type="method" value="X-ray"/>
    <property type="resolution" value="2.80 A"/>
    <property type="chains" value="A=1-91"/>
</dbReference>
<dbReference type="PDB" id="5Y39">
    <property type="method" value="X-ray"/>
    <property type="resolution" value="2.65 A"/>
    <property type="chains" value="E/J=1-90"/>
</dbReference>
<dbReference type="PDB" id="5Y3A">
    <property type="method" value="X-ray"/>
    <property type="resolution" value="2.90 A"/>
    <property type="chains" value="E/J=1-91"/>
</dbReference>
<dbReference type="PDB" id="5YK3">
    <property type="method" value="X-ray"/>
    <property type="resolution" value="3.01 A"/>
    <property type="chains" value="E/J=1-91, o=1-90"/>
</dbReference>
<dbReference type="PDB" id="5YK5">
    <property type="method" value="X-ray"/>
    <property type="resolution" value="2.03 A"/>
    <property type="chains" value="B/D=2-90"/>
</dbReference>
<dbReference type="PDB" id="6B9X">
    <property type="method" value="X-ray"/>
    <property type="resolution" value="1.42 A"/>
    <property type="chains" value="E=1-91"/>
</dbReference>
<dbReference type="PDB" id="6EHP">
    <property type="method" value="X-ray"/>
    <property type="resolution" value="2.30 A"/>
    <property type="chains" value="C=1-91"/>
</dbReference>
<dbReference type="PDB" id="6EHR">
    <property type="method" value="X-ray"/>
    <property type="resolution" value="2.90 A"/>
    <property type="chains" value="C=1-91"/>
</dbReference>
<dbReference type="PDB" id="6NZD">
    <property type="method" value="EM"/>
    <property type="resolution" value="3.60 A"/>
    <property type="chains" value="E=1-91"/>
</dbReference>
<dbReference type="PDB" id="6U62">
    <property type="method" value="EM"/>
    <property type="resolution" value="3.18 A"/>
    <property type="chains" value="H=1-91"/>
</dbReference>
<dbReference type="PDB" id="6ULG">
    <property type="method" value="EM"/>
    <property type="resolution" value="3.31 A"/>
    <property type="chains" value="C=1-91"/>
</dbReference>
<dbReference type="PDB" id="6WJ2">
    <property type="method" value="EM"/>
    <property type="resolution" value="3.20 A"/>
    <property type="chains" value="E=1-91"/>
</dbReference>
<dbReference type="PDB" id="6WJ3">
    <property type="method" value="EM"/>
    <property type="resolution" value="3.90 A"/>
    <property type="chains" value="E=1-91"/>
</dbReference>
<dbReference type="PDB" id="7T3A">
    <property type="method" value="EM"/>
    <property type="resolution" value="4.00 A"/>
    <property type="chains" value="Q=1-91"/>
</dbReference>
<dbReference type="PDB" id="7T3B">
    <property type="method" value="EM"/>
    <property type="resolution" value="3.90 A"/>
    <property type="chains" value="J=1-91"/>
</dbReference>
<dbReference type="PDB" id="7T3C">
    <property type="method" value="EM"/>
    <property type="resolution" value="4.00 A"/>
    <property type="chains" value="J/Q=1-91"/>
</dbReference>
<dbReference type="PDB" id="7UX2">
    <property type="method" value="EM"/>
    <property type="resolution" value="2.90 A"/>
    <property type="chains" value="H/O=1-91"/>
</dbReference>
<dbReference type="PDB" id="7UXC">
    <property type="method" value="EM"/>
    <property type="resolution" value="3.20 A"/>
    <property type="chains" value="J/Q=1-91"/>
</dbReference>
<dbReference type="PDB" id="7UXH">
    <property type="method" value="EM"/>
    <property type="resolution" value="3.20 A"/>
    <property type="chains" value="L/S/b/i=1-91"/>
</dbReference>
<dbReference type="PDB" id="8DHB">
    <property type="method" value="EM"/>
    <property type="resolution" value="3.53 A"/>
    <property type="chains" value="G=1-91"/>
</dbReference>
<dbReference type="PDBsum" id="3MS6"/>
<dbReference type="PDBsum" id="3MSH"/>
<dbReference type="PDBsum" id="5VOK"/>
<dbReference type="PDBsum" id="5X6U"/>
<dbReference type="PDBsum" id="5X6V"/>
<dbReference type="PDBsum" id="5Y38"/>
<dbReference type="PDBsum" id="5Y39"/>
<dbReference type="PDBsum" id="5Y3A"/>
<dbReference type="PDBsum" id="5YK3"/>
<dbReference type="PDBsum" id="5YK5"/>
<dbReference type="PDBsum" id="6B9X"/>
<dbReference type="PDBsum" id="6EHP"/>
<dbReference type="PDBsum" id="6EHR"/>
<dbReference type="PDBsum" id="6NZD"/>
<dbReference type="PDBsum" id="6U62"/>
<dbReference type="PDBsum" id="6ULG"/>
<dbReference type="PDBsum" id="6WJ2"/>
<dbReference type="PDBsum" id="6WJ3"/>
<dbReference type="PDBsum" id="7T3A"/>
<dbReference type="PDBsum" id="7T3B"/>
<dbReference type="PDBsum" id="7T3C"/>
<dbReference type="PDBsum" id="7UX2"/>
<dbReference type="PDBsum" id="7UXC"/>
<dbReference type="PDBsum" id="7UXH"/>
<dbReference type="PDBsum" id="8DHB"/>
<dbReference type="EMDB" id="EMD-0554"/>
<dbReference type="EMDB" id="EMD-20660"/>
<dbReference type="EMDB" id="EMD-20814"/>
<dbReference type="EMDB" id="EMD-21686"/>
<dbReference type="EMDB" id="EMD-21687"/>
<dbReference type="EMDB" id="EMD-25652"/>
<dbReference type="EMDB" id="EMD-25653"/>
<dbReference type="EMDB" id="EMD-25654"/>
<dbReference type="EMDB" id="EMD-26846"/>
<dbReference type="EMDB" id="EMD-26857"/>
<dbReference type="EMDB" id="EMD-26861"/>
<dbReference type="EMDB" id="EMD-27435"/>
<dbReference type="SMR" id="O43504"/>
<dbReference type="BioGRID" id="115796">
    <property type="interactions" value="155"/>
</dbReference>
<dbReference type="ComplexPortal" id="CPX-4741">
    <property type="entry name" value="Ragulator complex"/>
</dbReference>
<dbReference type="CORUM" id="O43504"/>
<dbReference type="DIP" id="DIP-61482N"/>
<dbReference type="FunCoup" id="O43504">
    <property type="interactions" value="858"/>
</dbReference>
<dbReference type="IntAct" id="O43504">
    <property type="interactions" value="116"/>
</dbReference>
<dbReference type="MINT" id="O43504"/>
<dbReference type="STRING" id="9606.ENSP00000256644"/>
<dbReference type="iPTMnet" id="O43504"/>
<dbReference type="PhosphoSitePlus" id="O43504"/>
<dbReference type="BioMuta" id="LAMTOR5"/>
<dbReference type="jPOST" id="O43504"/>
<dbReference type="MassIVE" id="O43504"/>
<dbReference type="PaxDb" id="9606-ENSP00000256644"/>
<dbReference type="PeptideAtlas" id="O43504"/>
<dbReference type="ProteomicsDB" id="48997"/>
<dbReference type="Pumba" id="O43504"/>
<dbReference type="TopDownProteomics" id="O43504"/>
<dbReference type="Antibodypedia" id="1857">
    <property type="antibodies" value="171 antibodies from 28 providers"/>
</dbReference>
<dbReference type="DNASU" id="10542"/>
<dbReference type="Ensembl" id="ENST00000602318.6">
    <property type="protein sequence ID" value="ENSP00000473439.1"/>
    <property type="gene ID" value="ENSG00000134248.14"/>
</dbReference>
<dbReference type="GeneID" id="10542"/>
<dbReference type="KEGG" id="hsa:10542"/>
<dbReference type="MANE-Select" id="ENST00000602318.6">
    <property type="protein sequence ID" value="ENSP00000473439.1"/>
    <property type="RefSeq nucleotide sequence ID" value="NM_001382293.1"/>
    <property type="RefSeq protein sequence ID" value="NP_001369222.1"/>
</dbReference>
<dbReference type="UCSC" id="uc001dzr.4">
    <property type="organism name" value="human"/>
</dbReference>
<dbReference type="AGR" id="HGNC:17955"/>
<dbReference type="CTD" id="10542"/>
<dbReference type="DisGeNET" id="10542"/>
<dbReference type="GeneCards" id="LAMTOR5"/>
<dbReference type="HGNC" id="HGNC:17955">
    <property type="gene designation" value="LAMTOR5"/>
</dbReference>
<dbReference type="HPA" id="ENSG00000134248">
    <property type="expression patterns" value="Low tissue specificity"/>
</dbReference>
<dbReference type="MIM" id="608521">
    <property type="type" value="gene"/>
</dbReference>
<dbReference type="neXtProt" id="NX_O43504"/>
<dbReference type="OpenTargets" id="ENSG00000134248"/>
<dbReference type="PharmGKB" id="PA29211"/>
<dbReference type="VEuPathDB" id="HostDB:ENSG00000134248"/>
<dbReference type="eggNOG" id="ENOG502S5TK">
    <property type="taxonomic scope" value="Eukaryota"/>
</dbReference>
<dbReference type="GeneTree" id="ENSGT00390000006247"/>
<dbReference type="HOGENOM" id="CLU_164970_0_0_1"/>
<dbReference type="InParanoid" id="O43504"/>
<dbReference type="OMA" id="GIIYKQT"/>
<dbReference type="OrthoDB" id="76862at2759"/>
<dbReference type="PAN-GO" id="O43504">
    <property type="GO annotations" value="5 GO annotations based on evolutionary models"/>
</dbReference>
<dbReference type="PhylomeDB" id="O43504"/>
<dbReference type="TreeFam" id="TF324433"/>
<dbReference type="PathwayCommons" id="O43504"/>
<dbReference type="Reactome" id="R-HSA-1632852">
    <property type="pathway name" value="Macroautophagy"/>
</dbReference>
<dbReference type="Reactome" id="R-HSA-165159">
    <property type="pathway name" value="MTOR signalling"/>
</dbReference>
<dbReference type="Reactome" id="R-HSA-166208">
    <property type="pathway name" value="mTORC1-mediated signalling"/>
</dbReference>
<dbReference type="Reactome" id="R-HSA-380972">
    <property type="pathway name" value="Energy dependent regulation of mTOR by LKB1-AMPK"/>
</dbReference>
<dbReference type="Reactome" id="R-HSA-5628897">
    <property type="pathway name" value="TP53 Regulates Metabolic Genes"/>
</dbReference>
<dbReference type="Reactome" id="R-HSA-8943724">
    <property type="pathway name" value="Regulation of PTEN gene transcription"/>
</dbReference>
<dbReference type="Reactome" id="R-HSA-9639288">
    <property type="pathway name" value="Amino acids regulate mTORC1"/>
</dbReference>
<dbReference type="SignaLink" id="O43504"/>
<dbReference type="SIGNOR" id="O43504"/>
<dbReference type="BioGRID-ORCS" id="10542">
    <property type="hits" value="83 hits in 1156 CRISPR screens"/>
</dbReference>
<dbReference type="CD-CODE" id="8C2F96ED">
    <property type="entry name" value="Centrosome"/>
</dbReference>
<dbReference type="ChiTaRS" id="LAMTOR5">
    <property type="organism name" value="human"/>
</dbReference>
<dbReference type="EvolutionaryTrace" id="O43504"/>
<dbReference type="GeneWiki" id="HBXIP"/>
<dbReference type="GenomeRNAi" id="10542"/>
<dbReference type="Pharos" id="O43504">
    <property type="development level" value="Tbio"/>
</dbReference>
<dbReference type="PRO" id="PR:O43504"/>
<dbReference type="Proteomes" id="UP000005640">
    <property type="component" value="Chromosome 1"/>
</dbReference>
<dbReference type="RNAct" id="O43504">
    <property type="molecule type" value="protein"/>
</dbReference>
<dbReference type="Bgee" id="ENSG00000134248">
    <property type="expression patterns" value="Expressed in nephron tubule and 210 other cell types or tissues"/>
</dbReference>
<dbReference type="ExpressionAtlas" id="O43504">
    <property type="expression patterns" value="baseline and differential"/>
</dbReference>
<dbReference type="GO" id="GO:0005829">
    <property type="term" value="C:cytosol"/>
    <property type="evidence" value="ECO:0000314"/>
    <property type="project" value="UniProtKB"/>
</dbReference>
<dbReference type="GO" id="GO:1990877">
    <property type="term" value="C:FNIP-folliculin RagC/D GAP"/>
    <property type="evidence" value="ECO:0000314"/>
    <property type="project" value="UniProtKB"/>
</dbReference>
<dbReference type="GO" id="GO:0031902">
    <property type="term" value="C:late endosome membrane"/>
    <property type="evidence" value="ECO:0000303"/>
    <property type="project" value="ComplexPortal"/>
</dbReference>
<dbReference type="GO" id="GO:0005765">
    <property type="term" value="C:lysosomal membrane"/>
    <property type="evidence" value="ECO:0000314"/>
    <property type="project" value="UniProtKB"/>
</dbReference>
<dbReference type="GO" id="GO:0005764">
    <property type="term" value="C:lysosome"/>
    <property type="evidence" value="ECO:0000314"/>
    <property type="project" value="UniProtKB"/>
</dbReference>
<dbReference type="GO" id="GO:0032991">
    <property type="term" value="C:protein-containing complex"/>
    <property type="evidence" value="ECO:0000314"/>
    <property type="project" value="UniProtKB"/>
</dbReference>
<dbReference type="GO" id="GO:0071986">
    <property type="term" value="C:Ragulator complex"/>
    <property type="evidence" value="ECO:0000314"/>
    <property type="project" value="UniProtKB"/>
</dbReference>
<dbReference type="GO" id="GO:0071230">
    <property type="term" value="P:cellular response to amino acid stimulus"/>
    <property type="evidence" value="ECO:0000314"/>
    <property type="project" value="ComplexPortal"/>
</dbReference>
<dbReference type="GO" id="GO:0043066">
    <property type="term" value="P:negative regulation of apoptotic process"/>
    <property type="evidence" value="ECO:0000314"/>
    <property type="project" value="UniProtKB"/>
</dbReference>
<dbReference type="GO" id="GO:0043123">
    <property type="term" value="P:positive regulation of canonical NF-kappaB signal transduction"/>
    <property type="evidence" value="ECO:0000314"/>
    <property type="project" value="ARUK-UCL"/>
</dbReference>
<dbReference type="GO" id="GO:0010628">
    <property type="term" value="P:positive regulation of gene expression"/>
    <property type="evidence" value="ECO:0000316"/>
    <property type="project" value="ARUK-UCL"/>
</dbReference>
<dbReference type="GO" id="GO:0032757">
    <property type="term" value="P:positive regulation of interleukin-8 production"/>
    <property type="evidence" value="ECO:0000316"/>
    <property type="project" value="ARUK-UCL"/>
</dbReference>
<dbReference type="GO" id="GO:1900182">
    <property type="term" value="P:positive regulation of protein localization to nucleus"/>
    <property type="evidence" value="ECO:0000314"/>
    <property type="project" value="ARUK-UCL"/>
</dbReference>
<dbReference type="GO" id="GO:0032008">
    <property type="term" value="P:positive regulation of TOR signaling"/>
    <property type="evidence" value="ECO:0000315"/>
    <property type="project" value="UniProtKB"/>
</dbReference>
<dbReference type="GO" id="GO:1904263">
    <property type="term" value="P:positive regulation of TORC1 signaling"/>
    <property type="evidence" value="ECO:0000314"/>
    <property type="project" value="UniProtKB"/>
</dbReference>
<dbReference type="GO" id="GO:0061462">
    <property type="term" value="P:protein localization to lysosome"/>
    <property type="evidence" value="ECO:0000315"/>
    <property type="project" value="UniProtKB"/>
</dbReference>
<dbReference type="GO" id="GO:0008361">
    <property type="term" value="P:regulation of cell size"/>
    <property type="evidence" value="ECO:0000315"/>
    <property type="project" value="UniProtKB"/>
</dbReference>
<dbReference type="GO" id="GO:0009615">
    <property type="term" value="P:response to virus"/>
    <property type="evidence" value="ECO:0000304"/>
    <property type="project" value="ProtInc"/>
</dbReference>
<dbReference type="GO" id="GO:0038202">
    <property type="term" value="P:TORC1 signaling"/>
    <property type="evidence" value="ECO:0000303"/>
    <property type="project" value="ComplexPortal"/>
</dbReference>
<dbReference type="GO" id="GO:0019079">
    <property type="term" value="P:viral genome replication"/>
    <property type="evidence" value="ECO:0000304"/>
    <property type="project" value="ProtInc"/>
</dbReference>
<dbReference type="FunFam" id="3.30.450.30:FF:000005">
    <property type="entry name" value="Ragulator complex protein LAMTOR5 homolog"/>
    <property type="match status" value="1"/>
</dbReference>
<dbReference type="Gene3D" id="3.30.450.30">
    <property type="entry name" value="Dynein light chain 2a, cytoplasmic"/>
    <property type="match status" value="1"/>
</dbReference>
<dbReference type="InterPro" id="IPR024135">
    <property type="entry name" value="LAMTOR5"/>
</dbReference>
<dbReference type="PANTHER" id="PTHR13342">
    <property type="entry name" value="RAGULATOR COMPLEX PROTEIN LAMTOR5"/>
    <property type="match status" value="1"/>
</dbReference>
<dbReference type="PANTHER" id="PTHR13342:SF2">
    <property type="entry name" value="RAGULATOR COMPLEX PROTEIN LAMTOR5"/>
    <property type="match status" value="1"/>
</dbReference>
<dbReference type="Pfam" id="PF16672">
    <property type="entry name" value="LAMTOR5"/>
    <property type="match status" value="1"/>
</dbReference>
<dbReference type="PRINTS" id="PR02092">
    <property type="entry name" value="HEPBVIRUSXIP"/>
</dbReference>
<dbReference type="SUPFAM" id="SSF103196">
    <property type="entry name" value="Roadblock/LC7 domain"/>
    <property type="match status" value="1"/>
</dbReference>
<proteinExistence type="evidence at protein level"/>
<name>LTOR5_HUMAN</name>
<comment type="function">
    <text evidence="1 4 7 8 10 12">As part of the Ragulator complex it is involved in amino acid sensing and activation of mTORC1, a signaling complex promoting cell growth in response to growth factors, energy levels, and amino acids (PubMed:22980980, PubMed:29158492, PubMed:30181260). Activated by amino acids through a mechanism involving the lysosomal V-ATPase, the Ragulator plays a dual role for the small GTPases Rag (RagA/RRAGA, RagB/RRAGB, RagC/RRAGC and/or RagD/RRAGD): it (1) acts as a guanine nucleotide exchange factor (GEF), activating the small GTPases Rag and (2) mediates recruitment of Rag GTPases to the lysosome membrane (PubMed:22980980, PubMed:28935770, PubMed:29107538, PubMed:29158492, PubMed:30181260). Activated Ragulator and Rag GTPases function as a scaffold recruiting mTORC1 to lysosomes where it is in turn activated (PubMed:22980980, PubMed:29158492, PubMed:30181260). When complexed to BIRC5, interferes with apoptosome assembly, preventing recruitment of pro-caspase-9 to oligomerized APAF1, thereby selectively suppressing apoptosis initiated via the mitochondrial/cytochrome c pathway (PubMed:12773388).</text>
</comment>
<comment type="subunit">
    <text evidence="1 2 3 4 5 6 7 8 9 10 11 13 14 15 16 17 18 19">Homodimer (PubMed:21059355). Part of the Ragulator complex composed of LAMTOR1, LAMTOR2, LAMTOR3, LAMTOR4 and LAMTOR5 (PubMed:22980980, PubMed:28935770, PubMed:29107538, PubMed:29123114, PubMed:29158492, PubMed:29285400, PubMed:31601708, PubMed:32868926, PubMed:35338845, PubMed:36103527, PubMed:36697823). LAMTOR4 and LAMTOR5 form a heterodimer that interacts, through LAMTOR1, with a LAMTOR2, LAMTOR3 heterodimer (PubMed:22980980). The Ragulator complex interacts with both the mTORC1 complex and heterodimers constituted of the Rag GTPases RagA/RRAGA, RagB/RRAGB, RagC/RRAGC and RagD/RRAGD; regulated by amino acid availability (PubMed:22980980, PubMed:32868926). The Ragulator complex interacts with SLC38A9; the probable amino acid sensor (PubMed:25561175, PubMed:25567906, PubMed:32868926). Component of the lysosomal folliculin complex (LFC), composed of FLCN, FNIP1 (or FNIP2), RagA/RRAGA or RagB/RRAGB GDP-bound, RagC/RRAGC or RagD/RRAGD GTP-bound, and Ragulator (PubMed:31672913, PubMed:31704029, PubMed:32868926). Interacts with phosphorylated BIRC5; the resulting complex binds pro-caspase-9, as well as active caspase-9, but much less efficiently (PubMed:12773388). Interacts with SUPV3L1 (PubMed:16176273).</text>
</comment>
<comment type="subunit">
    <text evidence="20">(Microbial infection) Interacts with hepatitis B virus (HBV) oncoprotein HBX C-terminus.</text>
</comment>
<comment type="interaction">
    <interactant intactId="EBI-713382">
        <id>O43504</id>
    </interactant>
    <interactant intactId="EBI-2896123">
        <id>Q9Y3D8</id>
        <label>AK6</label>
    </interactant>
    <organismsDiffer>false</organismsDiffer>
    <experiments>3</experiments>
</comment>
<comment type="interaction">
    <interactant intactId="EBI-713382">
        <id>O43504</id>
    </interactant>
    <interactant intactId="EBI-518823">
        <id>O15392</id>
        <label>BIRC5</label>
    </interactant>
    <organismsDiffer>false</organismsDiffer>
    <experiments>3</experiments>
</comment>
<comment type="interaction">
    <interactant intactId="EBI-713382">
        <id>O43504</id>
    </interactant>
    <interactant intactId="EBI-739624">
        <id>Q8NHQ1</id>
        <label>CEP70</label>
    </interactant>
    <organismsDiffer>false</organismsDiffer>
    <experiments>6</experiments>
</comment>
<comment type="interaction">
    <interactant intactId="EBI-713382">
        <id>O43504</id>
    </interactant>
    <interactant intactId="EBI-348399">
        <id>P22607</id>
        <label>FGFR3</label>
    </interactant>
    <organismsDiffer>false</organismsDiffer>
    <experiments>3</experiments>
</comment>
<comment type="interaction">
    <interactant intactId="EBI-713382">
        <id>O43504</id>
    </interactant>
    <interactant intactId="EBI-10226858">
        <id>Q0VDC6</id>
        <label>FKBP1A</label>
    </interactant>
    <organismsDiffer>false</organismsDiffer>
    <experiments>3</experiments>
</comment>
<comment type="interaction">
    <interactant intactId="EBI-713382">
        <id>O43504</id>
    </interactant>
    <interactant intactId="EBI-8285963">
        <id>Q14957</id>
        <label>GRIN2C</label>
    </interactant>
    <organismsDiffer>false</organismsDiffer>
    <experiments>3</experiments>
</comment>
<comment type="interaction">
    <interactant intactId="EBI-713382">
        <id>O43504</id>
    </interactant>
    <interactant intactId="EBI-351506">
        <id>P06396</id>
        <label>GSN</label>
    </interactant>
    <organismsDiffer>false</organismsDiffer>
    <experiments>3</experiments>
</comment>
<comment type="interaction">
    <interactant intactId="EBI-713382">
        <id>O43504</id>
    </interactant>
    <interactant intactId="EBI-356991">
        <id>P54652</id>
        <label>HSPA2</label>
    </interactant>
    <organismsDiffer>false</organismsDiffer>
    <experiments>3</experiments>
</comment>
<comment type="interaction">
    <interactant intactId="EBI-713382">
        <id>O43504</id>
    </interactant>
    <interactant intactId="EBI-5658976">
        <id>Q0VGL1</id>
        <label>LAMTOR4</label>
    </interactant>
    <organismsDiffer>false</organismsDiffer>
    <experiments>19</experiments>
</comment>
<comment type="interaction">
    <interactant intactId="EBI-713382">
        <id>O43504</id>
    </interactant>
    <interactant intactId="EBI-748397">
        <id>P50222</id>
        <label>MEOX2</label>
    </interactant>
    <organismsDiffer>false</organismsDiffer>
    <experiments>3</experiments>
</comment>
<comment type="interaction">
    <interactant intactId="EBI-713382">
        <id>O43504</id>
    </interactant>
    <interactant intactId="EBI-1053431">
        <id>P49591</id>
        <label>SARS1</label>
    </interactant>
    <organismsDiffer>false</organismsDiffer>
    <experiments>3</experiments>
</comment>
<comment type="interaction">
    <interactant intactId="EBI-713382">
        <id>O43504</id>
    </interactant>
    <interactant intactId="EBI-9978316">
        <id>Q8NBW4</id>
        <label>SLC38A9</label>
    </interactant>
    <organismsDiffer>false</organismsDiffer>
    <experiments>6</experiments>
</comment>
<comment type="interaction">
    <interactant intactId="EBI-713382">
        <id>O43504</id>
    </interactant>
    <interactant intactId="EBI-1186538">
        <id>Q14765</id>
        <label>STAT4</label>
    </interactant>
    <organismsDiffer>false</organismsDiffer>
    <experiments>2</experiments>
</comment>
<comment type="interaction">
    <interactant intactId="EBI-713382">
        <id>O43504</id>
    </interactant>
    <interactant intactId="EBI-954089">
        <id>O15273</id>
        <label>TCAP</label>
    </interactant>
    <organismsDiffer>false</organismsDiffer>
    <experiments>5</experiments>
</comment>
<comment type="interaction">
    <interactant intactId="EBI-713382">
        <id>O43504</id>
    </interactant>
    <interactant intactId="EBI-741480">
        <id>Q9UMX0</id>
        <label>UBQLN1</label>
    </interactant>
    <organismsDiffer>false</organismsDiffer>
    <experiments>3</experiments>
</comment>
<comment type="interaction">
    <interactant intactId="EBI-713382">
        <id>O43504</id>
    </interactant>
    <interactant intactId="EBI-711925">
        <id>Q05516</id>
        <label>ZBTB16</label>
    </interactant>
    <organismsDiffer>false</organismsDiffer>
    <experiments>8</experiments>
</comment>
<comment type="interaction">
    <interactant intactId="EBI-713382">
        <id>O43504</id>
    </interactant>
    <interactant intactId="EBI-9028527">
        <id>PRO_0000037547</id>
        <dbReference type="UniProtKB" id="Q9WMX2"/>
    </interactant>
    <organismsDiffer>true</organismsDiffer>
    <experiments>2</experiments>
</comment>
<comment type="subcellular location">
    <subcellularLocation>
        <location evidence="4">Lysosome</location>
    </subcellularLocation>
    <subcellularLocation>
        <location evidence="1">Cytoplasm</location>
        <location evidence="1">Cytosol</location>
    </subcellularLocation>
</comment>
<comment type="tissue specificity">
    <text evidence="20">Highly expressed in skeletal and cardiac muscle, followed by pancreas, kidney, liver, brain, placenta and lung (PubMed:9499022). Elevated levels in both cancerous and non-cancerous liver tissue of patients with chronic HBV infection compared with hepatic tissue without HBV infection (PubMed:9499022).</text>
</comment>
<comment type="similarity">
    <text evidence="24">Belongs to the LAMTOR5 family.</text>
</comment>
<comment type="sequence caution" evidence="24">
    <conflict type="erroneous initiation">
        <sequence resource="EMBL-CDS" id="AAH62619"/>
    </conflict>
    <text>Extended N-terminus.</text>
</comment>
<comment type="sequence caution" evidence="24">
    <conflict type="erroneous gene model prediction">
        <sequence resource="EMBL-CDS" id="EAW56447"/>
    </conflict>
</comment>
<reference key="1">
    <citation type="journal article" date="1998" name="J. Virol.">
        <title>Cloning and characterization of a novel hepatitis B virus x binding protein that inhibits viral replication.</title>
        <authorList>
            <person name="Melegari M."/>
            <person name="Scaglioni P.P."/>
            <person name="Wands J.R."/>
        </authorList>
    </citation>
    <scope>NUCLEOTIDE SEQUENCE [MRNA]</scope>
    <scope>TISSUE SPECIFICITY</scope>
    <scope>MUTAGENESIS OF THR-12 AND THR-36</scope>
    <scope>INTERACTION WITH HBX (MICROBIAL INFECTION)</scope>
    <source>
        <tissue>Liver</tissue>
    </source>
</reference>
<reference key="2">
    <citation type="submission" date="2004-05" db="EMBL/GenBank/DDBJ databases">
        <title>Clone of human uterus hepatitis B virus x interacting protein (HBXIP) gene.</title>
        <authorList>
            <person name="Zhang X."/>
            <person name="Ye L."/>
            <person name="Shi Z."/>
        </authorList>
    </citation>
    <scope>NUCLEOTIDE SEQUENCE [MRNA]</scope>
    <source>
        <tissue>Uterus</tissue>
    </source>
</reference>
<reference key="3">
    <citation type="submission" date="2004-06" db="EMBL/GenBank/DDBJ databases">
        <title>Cloning of human full open reading frames in Gateway(TM) system entry vector (pDONR201).</title>
        <authorList>
            <person name="Ebert L."/>
            <person name="Schick M."/>
            <person name="Neubert P."/>
            <person name="Schatten R."/>
            <person name="Henze S."/>
            <person name="Korn B."/>
        </authorList>
    </citation>
    <scope>NUCLEOTIDE SEQUENCE [LARGE SCALE MRNA]</scope>
</reference>
<reference key="4">
    <citation type="submission" date="2004-06" db="EMBL/GenBank/DDBJ databases">
        <title>Cloning of human full open reading frames in Gateway(TM) system entry vector (pDONR201).</title>
        <authorList>
            <person name="Halleck A."/>
            <person name="Ebert L."/>
            <person name="Mkoundinya M."/>
            <person name="Schick M."/>
            <person name="Eisenstein S."/>
            <person name="Neubert P."/>
            <person name="Kstrang K."/>
            <person name="Schatten R."/>
            <person name="Shen B."/>
            <person name="Henze S."/>
            <person name="Mar W."/>
            <person name="Korn B."/>
            <person name="Zuo D."/>
            <person name="Hu Y."/>
            <person name="LaBaer J."/>
        </authorList>
    </citation>
    <scope>NUCLEOTIDE SEQUENCE [LARGE SCALE MRNA]</scope>
</reference>
<reference key="5">
    <citation type="journal article" date="2006" name="Nature">
        <title>The DNA sequence and biological annotation of human chromosome 1.</title>
        <authorList>
            <person name="Gregory S.G."/>
            <person name="Barlow K.F."/>
            <person name="McLay K.E."/>
            <person name="Kaul R."/>
            <person name="Swarbreck D."/>
            <person name="Dunham A."/>
            <person name="Scott C.E."/>
            <person name="Howe K.L."/>
            <person name="Woodfine K."/>
            <person name="Spencer C.C.A."/>
            <person name="Jones M.C."/>
            <person name="Gillson C."/>
            <person name="Searle S."/>
            <person name="Zhou Y."/>
            <person name="Kokocinski F."/>
            <person name="McDonald L."/>
            <person name="Evans R."/>
            <person name="Phillips K."/>
            <person name="Atkinson A."/>
            <person name="Cooper R."/>
            <person name="Jones C."/>
            <person name="Hall R.E."/>
            <person name="Andrews T.D."/>
            <person name="Lloyd C."/>
            <person name="Ainscough R."/>
            <person name="Almeida J.P."/>
            <person name="Ambrose K.D."/>
            <person name="Anderson F."/>
            <person name="Andrew R.W."/>
            <person name="Ashwell R.I.S."/>
            <person name="Aubin K."/>
            <person name="Babbage A.K."/>
            <person name="Bagguley C.L."/>
            <person name="Bailey J."/>
            <person name="Beasley H."/>
            <person name="Bethel G."/>
            <person name="Bird C.P."/>
            <person name="Bray-Allen S."/>
            <person name="Brown J.Y."/>
            <person name="Brown A.J."/>
            <person name="Buckley D."/>
            <person name="Burton J."/>
            <person name="Bye J."/>
            <person name="Carder C."/>
            <person name="Chapman J.C."/>
            <person name="Clark S.Y."/>
            <person name="Clarke G."/>
            <person name="Clee C."/>
            <person name="Cobley V."/>
            <person name="Collier R.E."/>
            <person name="Corby N."/>
            <person name="Coville G.J."/>
            <person name="Davies J."/>
            <person name="Deadman R."/>
            <person name="Dunn M."/>
            <person name="Earthrowl M."/>
            <person name="Ellington A.G."/>
            <person name="Errington H."/>
            <person name="Frankish A."/>
            <person name="Frankland J."/>
            <person name="French L."/>
            <person name="Garner P."/>
            <person name="Garnett J."/>
            <person name="Gay L."/>
            <person name="Ghori M.R.J."/>
            <person name="Gibson R."/>
            <person name="Gilby L.M."/>
            <person name="Gillett W."/>
            <person name="Glithero R.J."/>
            <person name="Grafham D.V."/>
            <person name="Griffiths C."/>
            <person name="Griffiths-Jones S."/>
            <person name="Grocock R."/>
            <person name="Hammond S."/>
            <person name="Harrison E.S.I."/>
            <person name="Hart E."/>
            <person name="Haugen E."/>
            <person name="Heath P.D."/>
            <person name="Holmes S."/>
            <person name="Holt K."/>
            <person name="Howden P.J."/>
            <person name="Hunt A.R."/>
            <person name="Hunt S.E."/>
            <person name="Hunter G."/>
            <person name="Isherwood J."/>
            <person name="James R."/>
            <person name="Johnson C."/>
            <person name="Johnson D."/>
            <person name="Joy A."/>
            <person name="Kay M."/>
            <person name="Kershaw J.K."/>
            <person name="Kibukawa M."/>
            <person name="Kimberley A.M."/>
            <person name="King A."/>
            <person name="Knights A.J."/>
            <person name="Lad H."/>
            <person name="Laird G."/>
            <person name="Lawlor S."/>
            <person name="Leongamornlert D.A."/>
            <person name="Lloyd D.M."/>
            <person name="Loveland J."/>
            <person name="Lovell J."/>
            <person name="Lush M.J."/>
            <person name="Lyne R."/>
            <person name="Martin S."/>
            <person name="Mashreghi-Mohammadi M."/>
            <person name="Matthews L."/>
            <person name="Matthews N.S.W."/>
            <person name="McLaren S."/>
            <person name="Milne S."/>
            <person name="Mistry S."/>
            <person name="Moore M.J.F."/>
            <person name="Nickerson T."/>
            <person name="O'Dell C.N."/>
            <person name="Oliver K."/>
            <person name="Palmeiri A."/>
            <person name="Palmer S.A."/>
            <person name="Parker A."/>
            <person name="Patel D."/>
            <person name="Pearce A.V."/>
            <person name="Peck A.I."/>
            <person name="Pelan S."/>
            <person name="Phelps K."/>
            <person name="Phillimore B.J."/>
            <person name="Plumb R."/>
            <person name="Rajan J."/>
            <person name="Raymond C."/>
            <person name="Rouse G."/>
            <person name="Saenphimmachak C."/>
            <person name="Sehra H.K."/>
            <person name="Sheridan E."/>
            <person name="Shownkeen R."/>
            <person name="Sims S."/>
            <person name="Skuce C.D."/>
            <person name="Smith M."/>
            <person name="Steward C."/>
            <person name="Subramanian S."/>
            <person name="Sycamore N."/>
            <person name="Tracey A."/>
            <person name="Tromans A."/>
            <person name="Van Helmond Z."/>
            <person name="Wall M."/>
            <person name="Wallis J.M."/>
            <person name="White S."/>
            <person name="Whitehead S.L."/>
            <person name="Wilkinson J.E."/>
            <person name="Willey D.L."/>
            <person name="Williams H."/>
            <person name="Wilming L."/>
            <person name="Wray P.W."/>
            <person name="Wu Z."/>
            <person name="Coulson A."/>
            <person name="Vaudin M."/>
            <person name="Sulston J.E."/>
            <person name="Durbin R.M."/>
            <person name="Hubbard T."/>
            <person name="Wooster R."/>
            <person name="Dunham I."/>
            <person name="Carter N.P."/>
            <person name="McVean G."/>
            <person name="Ross M.T."/>
            <person name="Harrow J."/>
            <person name="Olson M.V."/>
            <person name="Beck S."/>
            <person name="Rogers J."/>
            <person name="Bentley D.R."/>
        </authorList>
    </citation>
    <scope>NUCLEOTIDE SEQUENCE [LARGE SCALE GENOMIC DNA]</scope>
</reference>
<reference key="6">
    <citation type="submission" date="2005-07" db="EMBL/GenBank/DDBJ databases">
        <authorList>
            <person name="Mural R.J."/>
            <person name="Istrail S."/>
            <person name="Sutton G.G."/>
            <person name="Florea L."/>
            <person name="Halpern A.L."/>
            <person name="Mobarry C.M."/>
            <person name="Lippert R."/>
            <person name="Walenz B."/>
            <person name="Shatkay H."/>
            <person name="Dew I."/>
            <person name="Miller J.R."/>
            <person name="Flanigan M.J."/>
            <person name="Edwards N.J."/>
            <person name="Bolanos R."/>
            <person name="Fasulo D."/>
            <person name="Halldorsson B.V."/>
            <person name="Hannenhalli S."/>
            <person name="Turner R."/>
            <person name="Yooseph S."/>
            <person name="Lu F."/>
            <person name="Nusskern D.R."/>
            <person name="Shue B.C."/>
            <person name="Zheng X.H."/>
            <person name="Zhong F."/>
            <person name="Delcher A.L."/>
            <person name="Huson D.H."/>
            <person name="Kravitz S.A."/>
            <person name="Mouchard L."/>
            <person name="Reinert K."/>
            <person name="Remington K.A."/>
            <person name="Clark A.G."/>
            <person name="Waterman M.S."/>
            <person name="Eichler E.E."/>
            <person name="Adams M.D."/>
            <person name="Hunkapiller M.W."/>
            <person name="Myers E.W."/>
            <person name="Venter J.C."/>
        </authorList>
    </citation>
    <scope>NUCLEOTIDE SEQUENCE [LARGE SCALE GENOMIC DNA]</scope>
</reference>
<reference key="7">
    <citation type="journal article" date="2004" name="Genome Res.">
        <title>The status, quality, and expansion of the NIH full-length cDNA project: the Mammalian Gene Collection (MGC).</title>
        <authorList>
            <consortium name="The MGC Project Team"/>
        </authorList>
    </citation>
    <scope>NUCLEOTIDE SEQUENCE [LARGE SCALE MRNA]</scope>
    <source>
        <tissue>Colon</tissue>
    </source>
</reference>
<reference key="8">
    <citation type="submission" date="2005-07" db="UniProtKB">
        <authorList>
            <person name="Bienvenut W.V."/>
            <person name="Quadroni M."/>
        </authorList>
    </citation>
    <scope>PROTEIN SEQUENCE OF 1-14</scope>
    <scope>ACETYLATION AT MET-1</scope>
    <scope>IDENTIFICATION BY MASS SPECTROMETRY</scope>
    <source>
        <tissue>Melanoma</tissue>
    </source>
</reference>
<reference key="9">
    <citation type="journal article" date="2003" name="EMBO J.">
        <title>HBXIP functions as a cofactor of survivin in apoptosis suppression.</title>
        <authorList>
            <person name="Marusawa H."/>
            <person name="Matsuzawa S."/>
            <person name="Welsh K."/>
            <person name="Zou H."/>
            <person name="Armstrong R."/>
            <person name="Tamm I."/>
            <person name="Reed J.C."/>
        </authorList>
    </citation>
    <scope>FUNCTION IN APOPTOSIS SUPPRESSION</scope>
    <scope>INTERACTION WITH BIRC5</scope>
    <scope>SUBCELLULAR LOCATION</scope>
</reference>
<reference key="10">
    <citation type="journal article" date="2005" name="FEBS J.">
        <title>Human ATP-dependent RNA/DNA helicase hSuv3p interacts with the cofactor of survivin HBXIP.</title>
        <authorList>
            <person name="Minczuk M."/>
            <person name="Mroczek S."/>
            <person name="Pawlak S.D."/>
            <person name="Stepien P.P."/>
        </authorList>
    </citation>
    <scope>INTERACTION WITH SUPV3L1</scope>
    <scope>SUBCELLULAR LOCATION</scope>
</reference>
<reference key="11">
    <citation type="journal article" date="2007" name="Science">
        <title>ATM and ATR substrate analysis reveals extensive protein networks responsive to DNA damage.</title>
        <authorList>
            <person name="Matsuoka S."/>
            <person name="Ballif B.A."/>
            <person name="Smogorzewska A."/>
            <person name="McDonald E.R. III"/>
            <person name="Hurov K.E."/>
            <person name="Luo J."/>
            <person name="Bakalarski C.E."/>
            <person name="Zhao Z."/>
            <person name="Solimini N."/>
            <person name="Lerenthal Y."/>
            <person name="Shiloh Y."/>
            <person name="Gygi S.P."/>
            <person name="Elledge S.J."/>
        </authorList>
    </citation>
    <scope>IDENTIFICATION BY MASS SPECTROMETRY [LARGE SCALE ANALYSIS]</scope>
    <source>
        <tissue>Embryonic kidney</tissue>
    </source>
</reference>
<reference key="12">
    <citation type="journal article" date="2009" name="Anal. Chem.">
        <title>Lys-N and trypsin cover complementary parts of the phosphoproteome in a refined SCX-based approach.</title>
        <authorList>
            <person name="Gauci S."/>
            <person name="Helbig A.O."/>
            <person name="Slijper M."/>
            <person name="Krijgsveld J."/>
            <person name="Heck A.J."/>
            <person name="Mohammed S."/>
        </authorList>
    </citation>
    <scope>ACETYLATION [LARGE SCALE ANALYSIS] AT MET-1</scope>
    <scope>IDENTIFICATION BY MASS SPECTROMETRY [LARGE SCALE ANALYSIS]</scope>
</reference>
<reference key="13">
    <citation type="journal article" date="2011" name="BMC Syst. Biol.">
        <title>Initial characterization of the human central proteome.</title>
        <authorList>
            <person name="Burkard T.R."/>
            <person name="Planyavsky M."/>
            <person name="Kaupe I."/>
            <person name="Breitwieser F.P."/>
            <person name="Buerckstuemmer T."/>
            <person name="Bennett K.L."/>
            <person name="Superti-Furga G."/>
            <person name="Colinge J."/>
        </authorList>
    </citation>
    <scope>IDENTIFICATION BY MASS SPECTROMETRY [LARGE SCALE ANALYSIS]</scope>
</reference>
<reference key="14">
    <citation type="journal article" date="2012" name="Cell">
        <title>Ragulator is a GEF for the Rag GTPases that signal amino acid levels to mTORC1.</title>
        <authorList>
            <person name="Bar-Peled L."/>
            <person name="Schweitzer L.D."/>
            <person name="Zoncu R."/>
            <person name="Sabatini D.M."/>
        </authorList>
    </citation>
    <scope>FUNCTION IN MTORC1 SIGNALING</scope>
    <scope>IDENTIFICATION IN RAGULATOR COMPLEX</scope>
    <scope>INTERACTION WITH MTORC1 COMPLEX AND RAG GTPASES</scope>
    <scope>SUBCELLULAR LOCATION</scope>
</reference>
<reference key="15">
    <citation type="journal article" date="2014" name="J. Proteomics">
        <title>An enzyme assisted RP-RPLC approach for in-depth analysis of human liver phosphoproteome.</title>
        <authorList>
            <person name="Bian Y."/>
            <person name="Song C."/>
            <person name="Cheng K."/>
            <person name="Dong M."/>
            <person name="Wang F."/>
            <person name="Huang J."/>
            <person name="Sun D."/>
            <person name="Wang L."/>
            <person name="Ye M."/>
            <person name="Zou H."/>
        </authorList>
    </citation>
    <scope>IDENTIFICATION BY MASS SPECTROMETRY [LARGE SCALE ANALYSIS]</scope>
    <source>
        <tissue>Liver</tissue>
    </source>
</reference>
<reference key="16">
    <citation type="journal article" date="2015" name="Nature">
        <title>SLC38A9 is a component of the lysosomal amino acid sensing machinery that controls mTORC1.</title>
        <authorList>
            <person name="Rebsamen M."/>
            <person name="Pochini L."/>
            <person name="Stasyk T."/>
            <person name="de Araujo M.E."/>
            <person name="Galluccio M."/>
            <person name="Kandasamy R.K."/>
            <person name="Snijder B."/>
            <person name="Fauster A."/>
            <person name="Rudashevskaya E.L."/>
            <person name="Bruckner M."/>
            <person name="Scorzoni S."/>
            <person name="Filipek P.A."/>
            <person name="Huber K.V."/>
            <person name="Bigenzahn J.W."/>
            <person name="Heinz L.X."/>
            <person name="Kraft C."/>
            <person name="Bennett K.L."/>
            <person name="Indiveri C."/>
            <person name="Huber L.A."/>
            <person name="Superti-Furga G."/>
        </authorList>
    </citation>
    <scope>INTERACTION WITH SLC38A9</scope>
</reference>
<reference key="17">
    <citation type="journal article" date="2015" name="Proteomics">
        <title>N-terminome analysis of the human mitochondrial proteome.</title>
        <authorList>
            <person name="Vaca Jacome A.S."/>
            <person name="Rabilloud T."/>
            <person name="Schaeffer-Reiss C."/>
            <person name="Rompais M."/>
            <person name="Ayoub D."/>
            <person name="Lane L."/>
            <person name="Bairoch A."/>
            <person name="Van Dorsselaer A."/>
            <person name="Carapito C."/>
        </authorList>
    </citation>
    <scope>ACETYLATION [LARGE SCALE ANALYSIS] AT MET-1</scope>
    <scope>IDENTIFICATION BY MASS SPECTROMETRY [LARGE SCALE ANALYSIS]</scope>
</reference>
<reference key="18">
    <citation type="journal article" date="2015" name="Science">
        <title>Metabolism. Lysosomal amino acid transporter SLC38A9 signals arginine sufficiency to mTORC1.</title>
        <authorList>
            <person name="Wang S."/>
            <person name="Tsun Z.Y."/>
            <person name="Wolfson R.L."/>
            <person name="Shen K."/>
            <person name="Wyant G.A."/>
            <person name="Plovanich M.E."/>
            <person name="Yuan E.D."/>
            <person name="Jones T.D."/>
            <person name="Chantranupong L."/>
            <person name="Comb W."/>
            <person name="Wang T."/>
            <person name="Bar-Peled L."/>
            <person name="Zoncu R."/>
            <person name="Straub C."/>
            <person name="Kim C."/>
            <person name="Park J."/>
            <person name="Sabatini B.L."/>
            <person name="Sabatini D.M."/>
        </authorList>
    </citation>
    <scope>INTERACTION WITH SLC38A9</scope>
</reference>
<reference key="19">
    <citation type="journal article" date="2018" name="Proc. Natl. Acad. Sci. U.S.A.">
        <title>Ragulator and SLC38A9 activate the Rag GTPases through noncanonical GEF mechanisms.</title>
        <authorList>
            <person name="Shen K."/>
            <person name="Sabatini D.M."/>
        </authorList>
    </citation>
    <scope>FUNCTION</scope>
</reference>
<reference key="20">
    <citation type="journal article" date="2011" name="J. Mol. Biol.">
        <title>Structural characterization of HBXIP: the protein that interacts with the anti-apoptotic protein survivin and the oncogenic viral protein HBx.</title>
        <authorList>
            <person name="Garcia-Saez I."/>
            <person name="Lacroix F.B."/>
            <person name="Blot D."/>
            <person name="Gabel F."/>
            <person name="Skoufias D.A."/>
        </authorList>
    </citation>
    <scope>X-RAY CRYSTALLOGRAPHY (1.51 ANGSTROMS)</scope>
    <scope>SUBUNIT</scope>
</reference>
<reference evidence="32 33" key="21">
    <citation type="journal article" date="2017" name="Cell Discov.">
        <title>Structural insight into the Ragulator complex which anchors mTORC1 to the lysosomal membrane.</title>
        <authorList>
            <person name="Mu Z."/>
            <person name="Wang L."/>
            <person name="Deng W."/>
            <person name="Wang J."/>
            <person name="Wu G."/>
        </authorList>
    </citation>
    <scope>X-RAY CRYSTALLOGRAPHY (2.03 ANGSTROMS) OF 3-90 AND 4-89 IN COMPLEX WITH LAMTOR1; LAMTOR2; LAMTOR3 AND LAMTOR4</scope>
    <scope>IDENTIFICATION IN RAGULATOR COMPLEX</scope>
</reference>
<reference evidence="34" key="22">
    <citation type="journal article" date="2017" name="Mol. Cell">
        <title>Hybrid Structure of the RagA/C-Ragulator mTORC1 Activation Complex.</title>
        <authorList>
            <person name="Su M.Y."/>
            <person name="Morris K.L."/>
            <person name="Kim D.J."/>
            <person name="Fu Y."/>
            <person name="Lawrence R."/>
            <person name="Stjepanovic G."/>
            <person name="Zoncu R."/>
            <person name="Hurley J.H."/>
        </authorList>
    </citation>
    <scope>X-RAY CRYSTALLOGRAPHY (1.42 ANGSTROMS) IN COMPLEX WITH LAMTOR1; LAMTOR2; LAMTOR3 AND LAMTOR4</scope>
    <scope>FUNCTION</scope>
    <scope>IDENTIFICATION IN RAGULATOR COMPLEX</scope>
</reference>
<reference evidence="29 30 31" key="23">
    <citation type="journal article" date="2017" name="Nat. Commun.">
        <title>Structural basis for Ragulator functioning as a scaffold in membrane-anchoring of Rag GTPases and mTORC1.</title>
        <authorList>
            <person name="Zhang T."/>
            <person name="Wang R."/>
            <person name="Wang Z."/>
            <person name="Wang X."/>
            <person name="Wang F."/>
            <person name="Ding J."/>
        </authorList>
    </citation>
    <scope>X-RAY CRYSTALLOGRAPHY (2.65 ANGSTROMS) IN COMPLEX WITH LAMTOR1; LAMTOR2; LAMTOR3 AND LAMTOR4</scope>
    <scope>IDENTIFICATION IN RAGULATOR COMPLEX</scope>
</reference>
<reference evidence="27 28" key="24">
    <citation type="journal article" date="2017" name="Nat. Commun.">
        <title>Structural basis for the assembly of the Ragulator-Rag GTPase complex.</title>
        <authorList>
            <person name="Yonehara R."/>
            <person name="Nada S."/>
            <person name="Nakai T."/>
            <person name="Nakai M."/>
            <person name="Kitamura A."/>
            <person name="Ogawa A."/>
            <person name="Nakatsumi H."/>
            <person name="Nakayama K.I."/>
            <person name="Li S."/>
            <person name="Standley D.M."/>
            <person name="Yamashita E."/>
            <person name="Nakagawa A."/>
            <person name="Okada M."/>
        </authorList>
    </citation>
    <scope>X-RAY CRYSTALLOGRAPHY (2.02 ANGSTROMS) IN COMPLEX WITH RRAGA; RRAGC; LAMTOR1; LAMTOR2; LAMTOR3 AND LAMTOR4</scope>
    <scope>FUNCTION</scope>
    <scope>IDENTIFICATION IN RAGULATOR COMPLEX</scope>
</reference>
<reference evidence="35 36" key="25">
    <citation type="journal article" date="2017" name="Science">
        <title>Crystal structure of the human lysosomal mTORC1 scaffold complex and its impact on signaling.</title>
        <authorList>
            <person name="de Araujo M.E.G."/>
            <person name="Naschberger A."/>
            <person name="Fuernrohr B.G."/>
            <person name="Stasyk T."/>
            <person name="Dunzendorfer-Matt T."/>
            <person name="Lechner S."/>
            <person name="Welti S."/>
            <person name="Kremser L."/>
            <person name="Shivalingaiah G."/>
            <person name="Offterdinger M."/>
            <person name="Lindner H.H."/>
            <person name="Huber L.A."/>
            <person name="Scheffzek K."/>
        </authorList>
    </citation>
    <scope>X-RAY CRYSTALLOGRAPHY (2.90 ANGSTROMS) OF 183-313 IN COMPLEX WITH RRAGA; RRAGC; LAMTOR1; LAMTOR2; LAMTOR3 AND LAMTOR4</scope>
    <scope>FUNCTION</scope>
    <scope>IDENTIFICATION IN RAGULATOR COMPLEX</scope>
</reference>
<reference evidence="39" key="26">
    <citation type="journal article" date="2019" name="Cell">
        <title>Cryo-EM structure of the human FLCN-FNIP2-Rag-Ragulator complex.</title>
        <authorList>
            <person name="Shen K."/>
            <person name="Rogala K.B."/>
            <person name="Chou H.T."/>
            <person name="Huang R.K."/>
            <person name="Yu Z."/>
            <person name="Sabatini D.M."/>
        </authorList>
    </citation>
    <scope>STRUCTURE BY ELECTRON MICROSCOPY (3.31 ANGSTROMS) IN COMPLEX WITH FLCN; FNIP2; RRAGA; RRAGC; LAMTOR1; LAMTOR2; LAMTOR3 AND LAMTOR4</scope>
    <scope>IDENTIFICATION IN THE LFC COMPLEX</scope>
</reference>
<reference evidence="26" key="27">
    <citation type="journal article" date="2019" name="FEBS Open Bio">
        <title>C7orf59/LAMTOR4 phosphorylation and structural flexibility modulate Ragulator assembly.</title>
        <authorList>
            <person name="Rasheed N."/>
            <person name="Lima T.B."/>
            <person name="Mercaldi G.F."/>
            <person name="Nascimento A.F.Z."/>
            <person name="Silva A.L.S."/>
            <person name="Righetto G.L."/>
            <person name="Bar-Peled L."/>
            <person name="Shen K."/>
            <person name="Sabatini D.M."/>
            <person name="Gozzo F.C."/>
            <person name="Aparicio R."/>
            <person name="Smetana J.H.C."/>
        </authorList>
    </citation>
    <scope>X-RAY CRYSTALLOGRAPHY (2.89 ANGSTROMS) IN COMPLEX WITH LAMTOR4</scope>
</reference>
<reference evidence="38" key="28">
    <citation type="journal article" date="2019" name="Science">
        <title>Structural basis for the docking of mTORC1 on the lysosomal surface.</title>
        <authorList>
            <person name="Rogala K.B."/>
            <person name="Gu X."/>
            <person name="Kedir J.F."/>
            <person name="Abu-Remaileh M."/>
            <person name="Bianchi L.F."/>
            <person name="Bottino A.M.S."/>
            <person name="Dueholm R."/>
            <person name="Niehaus A."/>
            <person name="Overwijn D."/>
            <person name="Fils A.P."/>
            <person name="Zhou S.X."/>
            <person name="Leary D."/>
            <person name="Laqtom N.N."/>
            <person name="Brignole E.J."/>
            <person name="Sabatini D.M."/>
        </authorList>
    </citation>
    <scope>STRUCTURE BY ELECTRON MICROSCOPY (3.18 ANGSTROMS) IN COMPLEX WITH RRAGA; RRAGC; RPTOR; LAMTOR1; LAMTOR2; LAMTOR3 AND LAMTOR4</scope>
    <scope>IDENTIFICATION IN THE RAGULATOR COMPLEX</scope>
</reference>
<reference evidence="37" key="29">
    <citation type="journal article" date="2019" name="Science">
        <title>Structural mechanism of a Rag GTPase activation checkpoint by the lysosomal folliculin complex.</title>
        <authorList>
            <person name="Lawrence R.E."/>
            <person name="Fromm S.A."/>
            <person name="Fu Y."/>
            <person name="Yokom A.L."/>
            <person name="Kim D.J."/>
            <person name="Thelen A.M."/>
            <person name="Young L.N."/>
            <person name="Lim C.Y."/>
            <person name="Samelson A.J."/>
            <person name="Hurley J.H."/>
            <person name="Zoncu R."/>
        </authorList>
    </citation>
    <scope>STRUCTURE BY ELECTRON MICROSCOPY (3.60 ANGSTROMS) IN COMPLEX WITH FLCN; FNIP2; RRAGA; RRAGC; LAMTOR1; LAMTOR2; LAMTOR3 AND LAMTOR4</scope>
    <scope>IDENTIFICATION IN THE LFC COMPLEX</scope>
</reference>
<reference evidence="40 41" key="30">
    <citation type="journal article" date="2020" name="Nat. Struct. Mol. Biol.">
        <title>Structural mechanism for amino acid-dependent Rag GTPase nucleotide state switching by SLC38A9.</title>
        <authorList>
            <person name="Fromm S.A."/>
            <person name="Lawrence R.E."/>
            <person name="Hurley J.H."/>
        </authorList>
    </citation>
    <scope>STRUCTURE BY ELECTRON MICROSCOPY (3.20 ANGSTROMS) IN COMPLEX WITH SLC38A9; LAMTOR1; LAMTOR2; LAMTOR3; LAMTOR4 AND THE RAG GTPASES HETERODIMER (RRAGA AND RRAGC)</scope>
    <scope>SUBUNIT</scope>
</reference>
<reference evidence="42 43 44" key="31">
    <citation type="journal article" date="2022" name="Mol. Cell">
        <title>Cryo-EM structures of the human GATOR1-Rag-Ragulator complex reveal a spatial-constraint regulated GAP mechanism.</title>
        <authorList>
            <person name="Egri S.B."/>
            <person name="Ouch C."/>
            <person name="Chou H.T."/>
            <person name="Yu Z."/>
            <person name="Song K."/>
            <person name="Xu C."/>
            <person name="Shen K."/>
        </authorList>
    </citation>
    <scope>STRUCTURE BY ELECTRON MICROSCOPY (3.90 ANGSTROMS) IN COMPLEX WITH RRAGA; RRAGC; DEPDC5; NPRL2; NPRL3; LAMTOR1; LAMTOR2; LAMTOR3 AND LAMTOR4</scope>
    <scope>IDENTIFICATION IN THE RAGULATOR COMPLEX</scope>
</reference>
<reference evidence="48" key="32">
    <citation type="journal article" date="2022" name="Sci. Adv.">
        <title>Structural basis for FLCN RagC GAP activation in MiT-TFE substrate-selective mTORC1 regulation.</title>
        <authorList>
            <person name="Jansen R.M."/>
            <person name="Peruzzo R."/>
            <person name="Fromm S.A."/>
            <person name="Yokom A.L."/>
            <person name="Zoncu R."/>
            <person name="Hurley J.H."/>
        </authorList>
    </citation>
    <scope>STRUCTURE BY ELECTRON MICROSCOPY (3.53 ANGSTROMS) IN COMPLEX WITH RRAGA; RRAGC; LAMTOR1; LAMTOR2; LAMTOR3; LAMTOR4; FNIP2; FLCN AND SLC38A9</scope>
    <scope>IDENTIFICATION IN THE RAGULATOR COMPLEX</scope>
</reference>
<reference evidence="45 46 47" key="33">
    <citation type="journal article" date="2023" name="Nature">
        <title>Structure of the lysosomal mTORC1-TFEB-Rag-Ragulator megacomplex.</title>
        <authorList>
            <person name="Cui Z."/>
            <person name="Napolitano G."/>
            <person name="de Araujo M.E.G."/>
            <person name="Esposito A."/>
            <person name="Monfregola J."/>
            <person name="Huber L.A."/>
            <person name="Ballabio A."/>
            <person name="Hurley J.H."/>
        </authorList>
    </citation>
    <scope>STRUCTURE BY ELECTRON MICROSCOPY (2.90 ANGSTROMS) IN COMPLEX WITH RRAGA; RRAGC; LAMTOR1; LAMTOR2; LAMTOR3; LAMTOR4; RPTOR; MLST8; MTOR AND TFEB</scope>
    <scope>IDENTIFICATION IN THE RAGULATOR COMPLEX</scope>
</reference>
<keyword id="KW-0002">3D-structure</keyword>
<keyword id="KW-0007">Acetylation</keyword>
<keyword id="KW-0963">Cytoplasm</keyword>
<keyword id="KW-0903">Direct protein sequencing</keyword>
<keyword id="KW-0458">Lysosome</keyword>
<keyword id="KW-1267">Proteomics identification</keyword>
<keyword id="KW-1185">Reference proteome</keyword>
<sequence length="91" mass="9614">MEATLEQHLEDTMKNPSIVGVLCTDSQGLNLGCRGTLSDEHAGVISVLAQQAAKLTSDPTDIPVVCLESDNGNIMIQKHDGITVAVHKMAS</sequence>
<evidence type="ECO:0000269" key="1">
    <source>
    </source>
</evidence>
<evidence type="ECO:0000269" key="2">
    <source>
    </source>
</evidence>
<evidence type="ECO:0000269" key="3">
    <source>
    </source>
</evidence>
<evidence type="ECO:0000269" key="4">
    <source>
    </source>
</evidence>
<evidence type="ECO:0000269" key="5">
    <source>
    </source>
</evidence>
<evidence type="ECO:0000269" key="6">
    <source>
    </source>
</evidence>
<evidence type="ECO:0000269" key="7">
    <source>
    </source>
</evidence>
<evidence type="ECO:0000269" key="8">
    <source>
    </source>
</evidence>
<evidence type="ECO:0000269" key="9">
    <source>
    </source>
</evidence>
<evidence type="ECO:0000269" key="10">
    <source>
    </source>
</evidence>
<evidence type="ECO:0000269" key="11">
    <source>
    </source>
</evidence>
<evidence type="ECO:0000269" key="12">
    <source>
    </source>
</evidence>
<evidence type="ECO:0000269" key="13">
    <source>
    </source>
</evidence>
<evidence type="ECO:0000269" key="14">
    <source>
    </source>
</evidence>
<evidence type="ECO:0000269" key="15">
    <source>
    </source>
</evidence>
<evidence type="ECO:0000269" key="16">
    <source>
    </source>
</evidence>
<evidence type="ECO:0000269" key="17">
    <source>
    </source>
</evidence>
<evidence type="ECO:0000269" key="18">
    <source>
    </source>
</evidence>
<evidence type="ECO:0000269" key="19">
    <source>
    </source>
</evidence>
<evidence type="ECO:0000269" key="20">
    <source>
    </source>
</evidence>
<evidence type="ECO:0000269" key="21">
    <source ref="8"/>
</evidence>
<evidence type="ECO:0000303" key="22">
    <source>
    </source>
</evidence>
<evidence type="ECO:0000303" key="23">
    <source ref="2"/>
</evidence>
<evidence type="ECO:0000305" key="24"/>
<evidence type="ECO:0000312" key="25">
    <source>
        <dbReference type="HGNC" id="HGNC:17955"/>
    </source>
</evidence>
<evidence type="ECO:0007744" key="26">
    <source>
        <dbReference type="PDB" id="5VOK"/>
    </source>
</evidence>
<evidence type="ECO:0007744" key="27">
    <source>
        <dbReference type="PDB" id="5X6U"/>
    </source>
</evidence>
<evidence type="ECO:0007744" key="28">
    <source>
        <dbReference type="PDB" id="5X6V"/>
    </source>
</evidence>
<evidence type="ECO:0007744" key="29">
    <source>
        <dbReference type="PDB" id="5Y38"/>
    </source>
</evidence>
<evidence type="ECO:0007744" key="30">
    <source>
        <dbReference type="PDB" id="5Y39"/>
    </source>
</evidence>
<evidence type="ECO:0007744" key="31">
    <source>
        <dbReference type="PDB" id="5Y3A"/>
    </source>
</evidence>
<evidence type="ECO:0007744" key="32">
    <source>
        <dbReference type="PDB" id="5YK3"/>
    </source>
</evidence>
<evidence type="ECO:0007744" key="33">
    <source>
        <dbReference type="PDB" id="5YK5"/>
    </source>
</evidence>
<evidence type="ECO:0007744" key="34">
    <source>
        <dbReference type="PDB" id="6B9X"/>
    </source>
</evidence>
<evidence type="ECO:0007744" key="35">
    <source>
        <dbReference type="PDB" id="6EHP"/>
    </source>
</evidence>
<evidence type="ECO:0007744" key="36">
    <source>
        <dbReference type="PDB" id="6EHR"/>
    </source>
</evidence>
<evidence type="ECO:0007744" key="37">
    <source>
        <dbReference type="PDB" id="6NZD"/>
    </source>
</evidence>
<evidence type="ECO:0007744" key="38">
    <source>
        <dbReference type="PDB" id="6U62"/>
    </source>
</evidence>
<evidence type="ECO:0007744" key="39">
    <source>
        <dbReference type="PDB" id="6ULG"/>
    </source>
</evidence>
<evidence type="ECO:0007744" key="40">
    <source>
        <dbReference type="PDB" id="6WJ2"/>
    </source>
</evidence>
<evidence type="ECO:0007744" key="41">
    <source>
        <dbReference type="PDB" id="6WJ3"/>
    </source>
</evidence>
<evidence type="ECO:0007744" key="42">
    <source>
        <dbReference type="PDB" id="7T3A"/>
    </source>
</evidence>
<evidence type="ECO:0007744" key="43">
    <source>
        <dbReference type="PDB" id="7T3B"/>
    </source>
</evidence>
<evidence type="ECO:0007744" key="44">
    <source>
        <dbReference type="PDB" id="7T3C"/>
    </source>
</evidence>
<evidence type="ECO:0007744" key="45">
    <source>
        <dbReference type="PDB" id="7UX2"/>
    </source>
</evidence>
<evidence type="ECO:0007744" key="46">
    <source>
        <dbReference type="PDB" id="7UXC"/>
    </source>
</evidence>
<evidence type="ECO:0007744" key="47">
    <source>
        <dbReference type="PDB" id="7UXH"/>
    </source>
</evidence>
<evidence type="ECO:0007744" key="48">
    <source>
        <dbReference type="PDB" id="8DHB"/>
    </source>
</evidence>
<evidence type="ECO:0007744" key="49">
    <source>
    </source>
</evidence>
<evidence type="ECO:0007744" key="50">
    <source>
    </source>
</evidence>
<evidence type="ECO:0007829" key="51">
    <source>
        <dbReference type="PDB" id="5VOK"/>
    </source>
</evidence>
<evidence type="ECO:0007829" key="52">
    <source>
        <dbReference type="PDB" id="5YK5"/>
    </source>
</evidence>
<evidence type="ECO:0007829" key="53">
    <source>
        <dbReference type="PDB" id="6B9X"/>
    </source>
</evidence>
<evidence type="ECO:0007829" key="54">
    <source>
        <dbReference type="PDB" id="6EHR"/>
    </source>
</evidence>
<evidence type="ECO:0007829" key="55">
    <source>
        <dbReference type="PDB" id="6WJ2"/>
    </source>
</evidence>
<gene>
    <name evidence="25" type="primary">LAMTOR5</name>
    <name evidence="23" type="synonym">HBXIP</name>
    <name evidence="22" type="synonym">XIP</name>
</gene>